<protein>
    <recommendedName>
        <fullName>Selenide, water dikinase 1</fullName>
        <ecNumber evidence="2">2.7.9.3</ecNumber>
    </recommendedName>
    <alternativeName>
        <fullName>Selenium donor protein 1</fullName>
    </alternativeName>
    <alternativeName>
        <fullName>Selenophosphate synthase 1</fullName>
    </alternativeName>
</protein>
<evidence type="ECO:0000250" key="1">
    <source>
        <dbReference type="UniProtKB" id="P16456"/>
    </source>
</evidence>
<evidence type="ECO:0000250" key="2">
    <source>
        <dbReference type="UniProtKB" id="P49903"/>
    </source>
</evidence>
<evidence type="ECO:0000255" key="3"/>
<evidence type="ECO:0000305" key="4"/>
<keyword id="KW-0007">Acetylation</keyword>
<keyword id="KW-0067">ATP-binding</keyword>
<keyword id="KW-1003">Cell membrane</keyword>
<keyword id="KW-0418">Kinase</keyword>
<keyword id="KW-0460">Magnesium</keyword>
<keyword id="KW-0472">Membrane</keyword>
<keyword id="KW-0479">Metal-binding</keyword>
<keyword id="KW-0547">Nucleotide-binding</keyword>
<keyword id="KW-0539">Nucleus</keyword>
<keyword id="KW-1185">Reference proteome</keyword>
<keyword id="KW-0711">Selenium</keyword>
<keyword id="KW-0808">Transferase</keyword>
<sequence>MSTRESFNPETYELDKSFRLTRFTELKGTGCKVPQDVLQKLLESLQENHFQEDEQFLGAVMPRLGIGMDTCVIPLRHGGLSLVQTTDYIYPIVDDPYMMGRIACANVLSDLYAMGVTECDNMLMLLGVSNKMTDRERDKVIPLIIQGFKDAAEEAGTSVTGGQTVLNPWIVLGGVATTVCQPNEFIMPDNAVPGDVLVLTKPLGTQVAVAVHQWLDIPEKWNKIKLVVTQEDVELAYQEAMMNMARLNRTAAGLMHTFNAHAATDITGFGILGHAQNLAKQQRNEVSFVIHNLPVLAKMAAVSKACGNMFGLMHGTCPETSGGLLICLPREQAARFCAEIKSPKYGEGHQAWIIGIVEKGNRTARIIDKPRIIEVAPQVATQNVNPTPGATS</sequence>
<feature type="initiator methionine" description="Removed" evidence="2">
    <location>
        <position position="1"/>
    </location>
</feature>
<feature type="chain" id="PRO_0000127649" description="Selenide, water dikinase 1">
    <location>
        <begin position="2"/>
        <end position="392"/>
    </location>
</feature>
<feature type="active site" evidence="3">
    <location>
        <position position="31"/>
    </location>
</feature>
<feature type="binding site" description="in other chain" evidence="2">
    <location>
        <position position="32"/>
    </location>
    <ligand>
        <name>ATP</name>
        <dbReference type="ChEBI" id="CHEBI:30616"/>
        <note>ligand shared between dimeric partners</note>
    </ligand>
</feature>
<feature type="binding site" description="in other chain" evidence="2">
    <location>
        <begin position="67"/>
        <end position="69"/>
    </location>
    <ligand>
        <name>ATP</name>
        <dbReference type="ChEBI" id="CHEBI:30616"/>
        <note>ligand shared between dimeric partners</note>
    </ligand>
</feature>
<feature type="binding site" evidence="2">
    <location>
        <position position="69"/>
    </location>
    <ligand>
        <name>Mg(2+)</name>
        <dbReference type="ChEBI" id="CHEBI:18420"/>
    </ligand>
</feature>
<feature type="binding site" description="in other chain" evidence="2">
    <location>
        <position position="87"/>
    </location>
    <ligand>
        <name>ATP</name>
        <dbReference type="ChEBI" id="CHEBI:30616"/>
        <note>ligand shared between dimeric partners</note>
    </ligand>
</feature>
<feature type="binding site" description="in other chain" evidence="2">
    <location>
        <position position="110"/>
    </location>
    <ligand>
        <name>ATP</name>
        <dbReference type="ChEBI" id="CHEBI:30616"/>
        <note>ligand shared between dimeric partners</note>
    </ligand>
</feature>
<feature type="binding site" evidence="2">
    <location>
        <position position="110"/>
    </location>
    <ligand>
        <name>Mg(2+)</name>
        <dbReference type="ChEBI" id="CHEBI:18420"/>
    </ligand>
</feature>
<feature type="binding site" evidence="2">
    <location>
        <begin position="161"/>
        <end position="164"/>
    </location>
    <ligand>
        <name>ATP</name>
        <dbReference type="ChEBI" id="CHEBI:30616"/>
        <note>ligand shared between dimeric partners</note>
    </ligand>
</feature>
<feature type="binding site" evidence="2">
    <location>
        <position position="265"/>
    </location>
    <ligand>
        <name>Mg(2+)</name>
        <dbReference type="ChEBI" id="CHEBI:18420"/>
    </ligand>
</feature>
<feature type="site" description="Important for catalytic activity" evidence="1">
    <location>
        <position position="32"/>
    </location>
</feature>
<feature type="modified residue" description="N-acetylserine" evidence="2">
    <location>
        <position position="2"/>
    </location>
</feature>
<name>SPS1_MOUSE</name>
<dbReference type="EC" id="2.7.9.3" evidence="2"/>
<dbReference type="EMBL" id="AK044971">
    <property type="protein sequence ID" value="BAC32163.1"/>
    <property type="molecule type" value="mRNA"/>
</dbReference>
<dbReference type="EMBL" id="AK053638">
    <property type="protein sequence ID" value="BAC35456.1"/>
    <property type="molecule type" value="mRNA"/>
</dbReference>
<dbReference type="CCDS" id="CCDS15659.1"/>
<dbReference type="RefSeq" id="NP_001349636.1">
    <property type="nucleotide sequence ID" value="NM_001362707.1"/>
</dbReference>
<dbReference type="RefSeq" id="NP_001349637.1">
    <property type="nucleotide sequence ID" value="NM_001362708.1"/>
</dbReference>
<dbReference type="RefSeq" id="NP_780609.4">
    <property type="nucleotide sequence ID" value="NM_175400.6"/>
</dbReference>
<dbReference type="RefSeq" id="XP_006497372.1">
    <property type="nucleotide sequence ID" value="XM_006497309.2"/>
</dbReference>
<dbReference type="RefSeq" id="XP_017170393.1">
    <property type="nucleotide sequence ID" value="XM_017314904.1"/>
</dbReference>
<dbReference type="SMR" id="Q8BH69"/>
<dbReference type="BioGRID" id="224546">
    <property type="interactions" value="7"/>
</dbReference>
<dbReference type="FunCoup" id="Q8BH69">
    <property type="interactions" value="3090"/>
</dbReference>
<dbReference type="IntAct" id="Q8BH69">
    <property type="interactions" value="1"/>
</dbReference>
<dbReference type="STRING" id="10090.ENSMUSP00000027973"/>
<dbReference type="GlyGen" id="Q8BH69">
    <property type="glycosylation" value="1 site"/>
</dbReference>
<dbReference type="iPTMnet" id="Q8BH69"/>
<dbReference type="PhosphoSitePlus" id="Q8BH69"/>
<dbReference type="SwissPalm" id="Q8BH69"/>
<dbReference type="jPOST" id="Q8BH69"/>
<dbReference type="PaxDb" id="10090-ENSMUSP00000027973"/>
<dbReference type="PeptideAtlas" id="Q8BH69"/>
<dbReference type="ProteomicsDB" id="258731"/>
<dbReference type="Pumba" id="Q8BH69"/>
<dbReference type="Antibodypedia" id="24810">
    <property type="antibodies" value="197 antibodies from 31 providers"/>
</dbReference>
<dbReference type="DNASU" id="109079"/>
<dbReference type="Ensembl" id="ENSMUST00000027973.14">
    <property type="protein sequence ID" value="ENSMUSP00000027973.8"/>
    <property type="gene ID" value="ENSMUSG00000026662.14"/>
</dbReference>
<dbReference type="Ensembl" id="ENSMUST00000115019.2">
    <property type="protein sequence ID" value="ENSMUSP00000110671.2"/>
    <property type="gene ID" value="ENSMUSG00000026662.14"/>
</dbReference>
<dbReference type="GeneID" id="109079"/>
<dbReference type="KEGG" id="mmu:109079"/>
<dbReference type="UCSC" id="uc008ifb.1">
    <property type="organism name" value="mouse"/>
</dbReference>
<dbReference type="AGR" id="MGI:1923580"/>
<dbReference type="CTD" id="22929"/>
<dbReference type="MGI" id="MGI:1923580">
    <property type="gene designation" value="Sephs1"/>
</dbReference>
<dbReference type="VEuPathDB" id="HostDB:ENSMUSG00000026662"/>
<dbReference type="eggNOG" id="KOG3939">
    <property type="taxonomic scope" value="Eukaryota"/>
</dbReference>
<dbReference type="GeneTree" id="ENSGT00390000000950"/>
<dbReference type="HOGENOM" id="CLU_032859_1_0_1"/>
<dbReference type="InParanoid" id="Q8BH69"/>
<dbReference type="OMA" id="LARDWMC"/>
<dbReference type="OrthoDB" id="409395at2759"/>
<dbReference type="PhylomeDB" id="Q8BH69"/>
<dbReference type="TreeFam" id="TF313811"/>
<dbReference type="BRENDA" id="2.7.9.3">
    <property type="organism ID" value="3474"/>
</dbReference>
<dbReference type="BioGRID-ORCS" id="109079">
    <property type="hits" value="17 hits in 79 CRISPR screens"/>
</dbReference>
<dbReference type="ChiTaRS" id="Sephs1">
    <property type="organism name" value="mouse"/>
</dbReference>
<dbReference type="PRO" id="PR:Q8BH69"/>
<dbReference type="Proteomes" id="UP000000589">
    <property type="component" value="Chromosome 2"/>
</dbReference>
<dbReference type="RNAct" id="Q8BH69">
    <property type="molecule type" value="protein"/>
</dbReference>
<dbReference type="Bgee" id="ENSMUSG00000026662">
    <property type="expression patterns" value="Expressed in floor plate of midbrain and 228 other cell types or tissues"/>
</dbReference>
<dbReference type="GO" id="GO:0031965">
    <property type="term" value="C:nuclear membrane"/>
    <property type="evidence" value="ECO:0000250"/>
    <property type="project" value="UniProtKB"/>
</dbReference>
<dbReference type="GO" id="GO:0005886">
    <property type="term" value="C:plasma membrane"/>
    <property type="evidence" value="ECO:0000250"/>
    <property type="project" value="UniProtKB"/>
</dbReference>
<dbReference type="GO" id="GO:0005524">
    <property type="term" value="F:ATP binding"/>
    <property type="evidence" value="ECO:0007669"/>
    <property type="project" value="UniProtKB-KW"/>
</dbReference>
<dbReference type="GO" id="GO:0046872">
    <property type="term" value="F:metal ion binding"/>
    <property type="evidence" value="ECO:0007669"/>
    <property type="project" value="UniProtKB-KW"/>
</dbReference>
<dbReference type="GO" id="GO:0046982">
    <property type="term" value="F:protein heterodimerization activity"/>
    <property type="evidence" value="ECO:0000250"/>
    <property type="project" value="UniProtKB"/>
</dbReference>
<dbReference type="GO" id="GO:0042803">
    <property type="term" value="F:protein homodimerization activity"/>
    <property type="evidence" value="ECO:0000250"/>
    <property type="project" value="UniProtKB"/>
</dbReference>
<dbReference type="GO" id="GO:0004756">
    <property type="term" value="F:selenide, water dikinase activity"/>
    <property type="evidence" value="ECO:0007669"/>
    <property type="project" value="UniProtKB-EC"/>
</dbReference>
<dbReference type="CDD" id="cd02195">
    <property type="entry name" value="SelD"/>
    <property type="match status" value="1"/>
</dbReference>
<dbReference type="FunFam" id="3.30.1330.10:FF:000006">
    <property type="entry name" value="Selenide water dikinase 1"/>
    <property type="match status" value="1"/>
</dbReference>
<dbReference type="FunFam" id="3.90.650.10:FF:000003">
    <property type="entry name" value="Selenide, water dikinase 1"/>
    <property type="match status" value="1"/>
</dbReference>
<dbReference type="Gene3D" id="3.90.650.10">
    <property type="entry name" value="PurM-like C-terminal domain"/>
    <property type="match status" value="1"/>
</dbReference>
<dbReference type="Gene3D" id="3.30.1330.10">
    <property type="entry name" value="PurM-like, N-terminal domain"/>
    <property type="match status" value="1"/>
</dbReference>
<dbReference type="InterPro" id="IPR010918">
    <property type="entry name" value="PurM-like_C_dom"/>
</dbReference>
<dbReference type="InterPro" id="IPR036676">
    <property type="entry name" value="PurM-like_C_sf"/>
</dbReference>
<dbReference type="InterPro" id="IPR016188">
    <property type="entry name" value="PurM-like_N"/>
</dbReference>
<dbReference type="InterPro" id="IPR036921">
    <property type="entry name" value="PurM-like_N_sf"/>
</dbReference>
<dbReference type="InterPro" id="IPR004536">
    <property type="entry name" value="SPS/SelD"/>
</dbReference>
<dbReference type="NCBIfam" id="TIGR00476">
    <property type="entry name" value="selD"/>
    <property type="match status" value="1"/>
</dbReference>
<dbReference type="PANTHER" id="PTHR10256">
    <property type="entry name" value="SELENIDE, WATER DIKINASE"/>
    <property type="match status" value="1"/>
</dbReference>
<dbReference type="PANTHER" id="PTHR10256:SF2">
    <property type="entry name" value="SELENIDE, WATER DIKINASE 1"/>
    <property type="match status" value="1"/>
</dbReference>
<dbReference type="Pfam" id="PF00586">
    <property type="entry name" value="AIRS"/>
    <property type="match status" value="1"/>
</dbReference>
<dbReference type="Pfam" id="PF02769">
    <property type="entry name" value="AIRS_C"/>
    <property type="match status" value="1"/>
</dbReference>
<dbReference type="PIRSF" id="PIRSF036407">
    <property type="entry name" value="Selenphspht_syn"/>
    <property type="match status" value="1"/>
</dbReference>
<dbReference type="SUPFAM" id="SSF56042">
    <property type="entry name" value="PurM C-terminal domain-like"/>
    <property type="match status" value="1"/>
</dbReference>
<dbReference type="SUPFAM" id="SSF55326">
    <property type="entry name" value="PurM N-terminal domain-like"/>
    <property type="match status" value="1"/>
</dbReference>
<organism>
    <name type="scientific">Mus musculus</name>
    <name type="common">Mouse</name>
    <dbReference type="NCBI Taxonomy" id="10090"/>
    <lineage>
        <taxon>Eukaryota</taxon>
        <taxon>Metazoa</taxon>
        <taxon>Chordata</taxon>
        <taxon>Craniata</taxon>
        <taxon>Vertebrata</taxon>
        <taxon>Euteleostomi</taxon>
        <taxon>Mammalia</taxon>
        <taxon>Eutheria</taxon>
        <taxon>Euarchontoglires</taxon>
        <taxon>Glires</taxon>
        <taxon>Rodentia</taxon>
        <taxon>Myomorpha</taxon>
        <taxon>Muroidea</taxon>
        <taxon>Muridae</taxon>
        <taxon>Murinae</taxon>
        <taxon>Mus</taxon>
        <taxon>Mus</taxon>
    </lineage>
</organism>
<reference key="1">
    <citation type="journal article" date="2005" name="Science">
        <title>The transcriptional landscape of the mammalian genome.</title>
        <authorList>
            <person name="Carninci P."/>
            <person name="Kasukawa T."/>
            <person name="Katayama S."/>
            <person name="Gough J."/>
            <person name="Frith M.C."/>
            <person name="Maeda N."/>
            <person name="Oyama R."/>
            <person name="Ravasi T."/>
            <person name="Lenhard B."/>
            <person name="Wells C."/>
            <person name="Kodzius R."/>
            <person name="Shimokawa K."/>
            <person name="Bajic V.B."/>
            <person name="Brenner S.E."/>
            <person name="Batalov S."/>
            <person name="Forrest A.R."/>
            <person name="Zavolan M."/>
            <person name="Davis M.J."/>
            <person name="Wilming L.G."/>
            <person name="Aidinis V."/>
            <person name="Allen J.E."/>
            <person name="Ambesi-Impiombato A."/>
            <person name="Apweiler R."/>
            <person name="Aturaliya R.N."/>
            <person name="Bailey T.L."/>
            <person name="Bansal M."/>
            <person name="Baxter L."/>
            <person name="Beisel K.W."/>
            <person name="Bersano T."/>
            <person name="Bono H."/>
            <person name="Chalk A.M."/>
            <person name="Chiu K.P."/>
            <person name="Choudhary V."/>
            <person name="Christoffels A."/>
            <person name="Clutterbuck D.R."/>
            <person name="Crowe M.L."/>
            <person name="Dalla E."/>
            <person name="Dalrymple B.P."/>
            <person name="de Bono B."/>
            <person name="Della Gatta G."/>
            <person name="di Bernardo D."/>
            <person name="Down T."/>
            <person name="Engstrom P."/>
            <person name="Fagiolini M."/>
            <person name="Faulkner G."/>
            <person name="Fletcher C.F."/>
            <person name="Fukushima T."/>
            <person name="Furuno M."/>
            <person name="Futaki S."/>
            <person name="Gariboldi M."/>
            <person name="Georgii-Hemming P."/>
            <person name="Gingeras T.R."/>
            <person name="Gojobori T."/>
            <person name="Green R.E."/>
            <person name="Gustincich S."/>
            <person name="Harbers M."/>
            <person name="Hayashi Y."/>
            <person name="Hensch T.K."/>
            <person name="Hirokawa N."/>
            <person name="Hill D."/>
            <person name="Huminiecki L."/>
            <person name="Iacono M."/>
            <person name="Ikeo K."/>
            <person name="Iwama A."/>
            <person name="Ishikawa T."/>
            <person name="Jakt M."/>
            <person name="Kanapin A."/>
            <person name="Katoh M."/>
            <person name="Kawasawa Y."/>
            <person name="Kelso J."/>
            <person name="Kitamura H."/>
            <person name="Kitano H."/>
            <person name="Kollias G."/>
            <person name="Krishnan S.P."/>
            <person name="Kruger A."/>
            <person name="Kummerfeld S.K."/>
            <person name="Kurochkin I.V."/>
            <person name="Lareau L.F."/>
            <person name="Lazarevic D."/>
            <person name="Lipovich L."/>
            <person name="Liu J."/>
            <person name="Liuni S."/>
            <person name="McWilliam S."/>
            <person name="Madan Babu M."/>
            <person name="Madera M."/>
            <person name="Marchionni L."/>
            <person name="Matsuda H."/>
            <person name="Matsuzawa S."/>
            <person name="Miki H."/>
            <person name="Mignone F."/>
            <person name="Miyake S."/>
            <person name="Morris K."/>
            <person name="Mottagui-Tabar S."/>
            <person name="Mulder N."/>
            <person name="Nakano N."/>
            <person name="Nakauchi H."/>
            <person name="Ng P."/>
            <person name="Nilsson R."/>
            <person name="Nishiguchi S."/>
            <person name="Nishikawa S."/>
            <person name="Nori F."/>
            <person name="Ohara O."/>
            <person name="Okazaki Y."/>
            <person name="Orlando V."/>
            <person name="Pang K.C."/>
            <person name="Pavan W.J."/>
            <person name="Pavesi G."/>
            <person name="Pesole G."/>
            <person name="Petrovsky N."/>
            <person name="Piazza S."/>
            <person name="Reed J."/>
            <person name="Reid J.F."/>
            <person name="Ring B.Z."/>
            <person name="Ringwald M."/>
            <person name="Rost B."/>
            <person name="Ruan Y."/>
            <person name="Salzberg S.L."/>
            <person name="Sandelin A."/>
            <person name="Schneider C."/>
            <person name="Schoenbach C."/>
            <person name="Sekiguchi K."/>
            <person name="Semple C.A."/>
            <person name="Seno S."/>
            <person name="Sessa L."/>
            <person name="Sheng Y."/>
            <person name="Shibata Y."/>
            <person name="Shimada H."/>
            <person name="Shimada K."/>
            <person name="Silva D."/>
            <person name="Sinclair B."/>
            <person name="Sperling S."/>
            <person name="Stupka E."/>
            <person name="Sugiura K."/>
            <person name="Sultana R."/>
            <person name="Takenaka Y."/>
            <person name="Taki K."/>
            <person name="Tammoja K."/>
            <person name="Tan S.L."/>
            <person name="Tang S."/>
            <person name="Taylor M.S."/>
            <person name="Tegner J."/>
            <person name="Teichmann S.A."/>
            <person name="Ueda H.R."/>
            <person name="van Nimwegen E."/>
            <person name="Verardo R."/>
            <person name="Wei C.L."/>
            <person name="Yagi K."/>
            <person name="Yamanishi H."/>
            <person name="Zabarovsky E."/>
            <person name="Zhu S."/>
            <person name="Zimmer A."/>
            <person name="Hide W."/>
            <person name="Bult C."/>
            <person name="Grimmond S.M."/>
            <person name="Teasdale R.D."/>
            <person name="Liu E.T."/>
            <person name="Brusic V."/>
            <person name="Quackenbush J."/>
            <person name="Wahlestedt C."/>
            <person name="Mattick J.S."/>
            <person name="Hume D.A."/>
            <person name="Kai C."/>
            <person name="Sasaki D."/>
            <person name="Tomaru Y."/>
            <person name="Fukuda S."/>
            <person name="Kanamori-Katayama M."/>
            <person name="Suzuki M."/>
            <person name="Aoki J."/>
            <person name="Arakawa T."/>
            <person name="Iida J."/>
            <person name="Imamura K."/>
            <person name="Itoh M."/>
            <person name="Kato T."/>
            <person name="Kawaji H."/>
            <person name="Kawagashira N."/>
            <person name="Kawashima T."/>
            <person name="Kojima M."/>
            <person name="Kondo S."/>
            <person name="Konno H."/>
            <person name="Nakano K."/>
            <person name="Ninomiya N."/>
            <person name="Nishio T."/>
            <person name="Okada M."/>
            <person name="Plessy C."/>
            <person name="Shibata K."/>
            <person name="Shiraki T."/>
            <person name="Suzuki S."/>
            <person name="Tagami M."/>
            <person name="Waki K."/>
            <person name="Watahiki A."/>
            <person name="Okamura-Oho Y."/>
            <person name="Suzuki H."/>
            <person name="Kawai J."/>
            <person name="Hayashizaki Y."/>
        </authorList>
    </citation>
    <scope>NUCLEOTIDE SEQUENCE [LARGE SCALE MRNA]</scope>
    <source>
        <strain>C57BL/6J</strain>
        <tissue>Eye</tissue>
    </source>
</reference>
<reference key="2">
    <citation type="journal article" date="2010" name="Cell">
        <title>A tissue-specific atlas of mouse protein phosphorylation and expression.</title>
        <authorList>
            <person name="Huttlin E.L."/>
            <person name="Jedrychowski M.P."/>
            <person name="Elias J.E."/>
            <person name="Goswami T."/>
            <person name="Rad R."/>
            <person name="Beausoleil S.A."/>
            <person name="Villen J."/>
            <person name="Haas W."/>
            <person name="Sowa M.E."/>
            <person name="Gygi S.P."/>
        </authorList>
    </citation>
    <scope>IDENTIFICATION BY MASS SPECTROMETRY [LARGE SCALE ANALYSIS]</scope>
    <source>
        <tissue>Brain</tissue>
        <tissue>Brown adipose tissue</tissue>
        <tissue>Heart</tissue>
        <tissue>Kidney</tissue>
        <tissue>Liver</tissue>
        <tissue>Lung</tissue>
        <tissue>Pancreas</tissue>
        <tissue>Spleen</tissue>
        <tissue>Testis</tissue>
    </source>
</reference>
<gene>
    <name type="primary">Sephs1</name>
    <name type="synonym">Sps1</name>
</gene>
<accession>Q8BH69</accession>
<comment type="function">
    <text evidence="2">Synthesizes selenophosphate from selenide and ATP.</text>
</comment>
<comment type="catalytic activity">
    <reaction evidence="2">
        <text>hydrogenselenide + ATP + H2O = selenophosphate + AMP + phosphate + 2 H(+)</text>
        <dbReference type="Rhea" id="RHEA:18737"/>
        <dbReference type="ChEBI" id="CHEBI:15377"/>
        <dbReference type="ChEBI" id="CHEBI:15378"/>
        <dbReference type="ChEBI" id="CHEBI:16144"/>
        <dbReference type="ChEBI" id="CHEBI:29317"/>
        <dbReference type="ChEBI" id="CHEBI:30616"/>
        <dbReference type="ChEBI" id="CHEBI:43474"/>
        <dbReference type="ChEBI" id="CHEBI:456215"/>
        <dbReference type="EC" id="2.7.9.3"/>
    </reaction>
</comment>
<comment type="cofactor">
    <cofactor evidence="2">
        <name>Mg(2+)</name>
        <dbReference type="ChEBI" id="CHEBI:18420"/>
    </cofactor>
    <text evidence="2">Binds 1 Mg(2+) ion per monomer.</text>
</comment>
<comment type="subunit">
    <text evidence="2">Homodimer.</text>
</comment>
<comment type="subcellular location">
    <subcellularLocation>
        <location evidence="2">Cell membrane</location>
        <topology evidence="4">Peripheral membrane protein</topology>
    </subcellularLocation>
    <subcellularLocation>
        <location evidence="2">Nucleus membrane</location>
        <topology evidence="4">Peripheral membrane protein</topology>
    </subcellularLocation>
</comment>
<comment type="similarity">
    <text evidence="4">Belongs to the selenophosphate synthase 1 family. Class II subfamily.</text>
</comment>
<comment type="caution">
    <text evidence="4">The conserved active site Cys (or selenocysteine) residue in position 29 is replaced by a Thr. However, as function in selenoprotein synthesis is probable, it is possible Cys-31 is the active site.</text>
</comment>
<proteinExistence type="evidence at protein level"/>